<comment type="function">
    <text evidence="3 6">Insect-selective neurotoxin that potently blocks insect calcium-activated potassium (BKCa) channels (Slo-type) in cockroach dorsal unpaired median (DUM) neurons (IC(50)=3.7 nM) (PubMed:21447641). This occurs in the absence of any shifts in the voltage dependence of activation (PubMed:21447641). At high concentrations (330 nM), it partially inhibits cockroach delayed-rectifier potassium channels (Kv) currents (PubMed:21447641). May interact with the turret and/or loop region of the external entrance to the channel and does not project deeply into the pore of the channel (Probable). In vivo, does not show toxicity in mice after intracerebroventricular injection of up to 25 pmol/g (1.8 ug/20 g mouse) (PubMed:21447641).</text>
</comment>
<comment type="subcellular location">
    <subcellularLocation>
        <location evidence="3">Secreted</location>
    </subcellularLocation>
</comment>
<comment type="tissue specificity">
    <text evidence="6">Expressed by the venom gland.</text>
</comment>
<comment type="domain">
    <text evidence="2">The presence of a 'disulfide through disulfide knot' structurally defines this protein as a knottin.</text>
</comment>
<comment type="mass spectrometry">
    <text>Monoisotopic mass.</text>
</comment>
<comment type="toxic dose">
    <text evidence="3">Intrathoracical injection into juvenile crickets (Gryllus bimaculatus) of this toxin (at a dose of ca. 1100 pmol/g (4 ug/g)) causes a rapid insecticidal activity, with complete paralysis within 5 minutes and death within 15 minutes.</text>
</comment>
<comment type="miscellaneous">
    <text evidence="1">Negative results: does not show activity on insect voltage-gated sodium channel (Nav) or insect calcium channels (Cav) in cockroach DUM neurons.</text>
</comment>
<comment type="similarity">
    <text evidence="5">Belongs to the neurotoxin 30 (phrixotoxin) family.</text>
</comment>
<comment type="caution">
    <text evidence="5">This toxin has the prefix lambda in its name (instead of kappa), since lambda is the Greek letter attributed to calcium-activated potassium (KCa) channel impairing toxins (according to the nomenclature of King et al., 2008).</text>
</comment>
<reference key="1">
    <citation type="journal article" date="2011" name="Mol. Pharmacol.">
        <title>A novel family of insect-selective peptide neurotoxins targeting insect large-conductance calcium-activated K+ channels isolated from the venom of the theraphosid spider Eucratoscelus constrictus.</title>
        <authorList>
            <person name="Windley M.J."/>
            <person name="Escoubas P."/>
            <person name="Valenzuela S.M."/>
            <person name="Nicholson G.M."/>
        </authorList>
    </citation>
    <scope>PROTEIN SEQUENCE</scope>
    <scope>FUNCTION</scope>
    <scope>SUBCELLULAR LOCATION</scope>
    <scope>MASS SPECTROMETRY</scope>
    <scope>TOXIC DOSE</scope>
    <source>
        <tissue>Venom</tissue>
    </source>
</reference>
<organism>
    <name type="scientific">Eucratoscelus constrictus</name>
    <name type="common">African red-rump baboon spider</name>
    <dbReference type="NCBI Taxonomy" id="2771863"/>
    <lineage>
        <taxon>Eukaryota</taxon>
        <taxon>Metazoa</taxon>
        <taxon>Ecdysozoa</taxon>
        <taxon>Arthropoda</taxon>
        <taxon>Chelicerata</taxon>
        <taxon>Arachnida</taxon>
        <taxon>Araneae</taxon>
        <taxon>Mygalomorphae</taxon>
        <taxon>Theraphosidae</taxon>
        <taxon>Eucratoscelus</taxon>
    </lineage>
</organism>
<accession>P0DQO5</accession>
<feature type="peptide" id="PRO_0000451986" description="Lambda-theraphotoxin-Ec2a">
    <location>
        <begin position="1"/>
        <end position="29"/>
    </location>
</feature>
<feature type="disulfide bond" evidence="2">
    <location>
        <begin position="2"/>
        <end position="16"/>
    </location>
</feature>
<feature type="disulfide bond" evidence="2">
    <location>
        <begin position="9"/>
        <end position="21"/>
    </location>
</feature>
<feature type="disulfide bond" evidence="2">
    <location>
        <begin position="15"/>
        <end position="25"/>
    </location>
</feature>
<dbReference type="SMR" id="P0DQO5"/>
<dbReference type="GO" id="GO:0005576">
    <property type="term" value="C:extracellular region"/>
    <property type="evidence" value="ECO:0007669"/>
    <property type="project" value="UniProtKB-SubCell"/>
</dbReference>
<dbReference type="GO" id="GO:0015459">
    <property type="term" value="F:potassium channel regulator activity"/>
    <property type="evidence" value="ECO:0007669"/>
    <property type="project" value="UniProtKB-KW"/>
</dbReference>
<dbReference type="GO" id="GO:0090729">
    <property type="term" value="F:toxin activity"/>
    <property type="evidence" value="ECO:0007669"/>
    <property type="project" value="UniProtKB-KW"/>
</dbReference>
<dbReference type="SUPFAM" id="SSF57059">
    <property type="entry name" value="omega toxin-like"/>
    <property type="match status" value="1"/>
</dbReference>
<evidence type="ECO:0000250" key="1">
    <source>
        <dbReference type="UniProtKB" id="P0DQO6"/>
    </source>
</evidence>
<evidence type="ECO:0000250" key="2">
    <source>
        <dbReference type="UniProtKB" id="P83476"/>
    </source>
</evidence>
<evidence type="ECO:0000269" key="3">
    <source>
    </source>
</evidence>
<evidence type="ECO:0000303" key="4">
    <source>
    </source>
</evidence>
<evidence type="ECO:0000305" key="5"/>
<evidence type="ECO:0000305" key="6">
    <source>
    </source>
</evidence>
<proteinExistence type="evidence at protein level"/>
<keyword id="KW-1221">Calcium-activated potassium channel impairing toxin</keyword>
<keyword id="KW-0903">Direct protein sequencing</keyword>
<keyword id="KW-1015">Disulfide bond</keyword>
<keyword id="KW-0872">Ion channel impairing toxin</keyword>
<keyword id="KW-0528">Neurotoxin</keyword>
<keyword id="KW-0632">Potassium channel impairing toxin</keyword>
<keyword id="KW-0964">Secreted</keyword>
<keyword id="KW-0800">Toxin</keyword>
<name>TX2A_EUCCO</name>
<sequence>YCQKFLWTCDTERKCCEDMVCELWCKLEK</sequence>
<protein>
    <recommendedName>
        <fullName evidence="5">Lambda-theraphotoxin-Ec2a</fullName>
        <shortName evidence="5">Lambda-TRTX-Ec2a</shortName>
    </recommendedName>
    <alternativeName>
        <fullName evidence="4">Kappa-theraphotoxin-Ec2a</fullName>
        <shortName evidence="4">Kappa-TRTX-Ec2a</shortName>
    </alternativeName>
</protein>